<feature type="chain" id="PRO_0000092868" description="Phosphate import ATP-binding protein PstB">
    <location>
        <begin position="1"/>
        <end position="267"/>
    </location>
</feature>
<feature type="domain" description="ABC transporter" evidence="1">
    <location>
        <begin position="21"/>
        <end position="262"/>
    </location>
</feature>
<feature type="binding site" evidence="1">
    <location>
        <begin position="53"/>
        <end position="60"/>
    </location>
    <ligand>
        <name>ATP</name>
        <dbReference type="ChEBI" id="CHEBI:30616"/>
    </ligand>
</feature>
<organism>
    <name type="scientific">Mesorhizobium japonicum (strain LMG 29417 / CECT 9101 / MAFF 303099)</name>
    <name type="common">Mesorhizobium loti (strain MAFF 303099)</name>
    <dbReference type="NCBI Taxonomy" id="266835"/>
    <lineage>
        <taxon>Bacteria</taxon>
        <taxon>Pseudomonadati</taxon>
        <taxon>Pseudomonadota</taxon>
        <taxon>Alphaproteobacteria</taxon>
        <taxon>Hyphomicrobiales</taxon>
        <taxon>Phyllobacteriaceae</taxon>
        <taxon>Mesorhizobium</taxon>
    </lineage>
</organism>
<evidence type="ECO:0000255" key="1">
    <source>
        <dbReference type="HAMAP-Rule" id="MF_01702"/>
    </source>
</evidence>
<keyword id="KW-0067">ATP-binding</keyword>
<keyword id="KW-0997">Cell inner membrane</keyword>
<keyword id="KW-1003">Cell membrane</keyword>
<keyword id="KW-0472">Membrane</keyword>
<keyword id="KW-0547">Nucleotide-binding</keyword>
<keyword id="KW-0592">Phosphate transport</keyword>
<keyword id="KW-1278">Translocase</keyword>
<keyword id="KW-0813">Transport</keyword>
<name>PSTB_RHILO</name>
<gene>
    <name evidence="1" type="primary">pstB</name>
    <name type="ordered locus">mll3719</name>
</gene>
<sequence length="267" mass="29907">MSQMLSPDMTIAAEAVTKAKIEVKNLNFYYGQSKALKDITLSLPERSVTAFIGPSGCGKSTLLRVFNRIYELYPKQTAEGQVLLDGQNVLDRSQDLNLLRTKIGMVFQKPTPFPMSIYENIAFGVRLYEKISKAEMDGRVEQALKRAALWTEVKDKLNASGLSLSGGQQQRLCIARTVAVKPEVILLDEPASALDPLSTAKIEELIDELQADYTIVIVTHNMQQAARVSKQTAFMYLGELVEFDRTEKIFTSPREKRTQDYITGRFG</sequence>
<dbReference type="EC" id="7.3.2.1" evidence="1"/>
<dbReference type="EMBL" id="BA000012">
    <property type="protein sequence ID" value="BAB50552.1"/>
    <property type="molecule type" value="Genomic_DNA"/>
</dbReference>
<dbReference type="RefSeq" id="WP_010911898.1">
    <property type="nucleotide sequence ID" value="NC_002678.2"/>
</dbReference>
<dbReference type="SMR" id="Q98FL5"/>
<dbReference type="GeneID" id="66681669"/>
<dbReference type="KEGG" id="mlo:mll3719"/>
<dbReference type="eggNOG" id="COG1117">
    <property type="taxonomic scope" value="Bacteria"/>
</dbReference>
<dbReference type="HOGENOM" id="CLU_000604_1_22_5"/>
<dbReference type="Proteomes" id="UP000000552">
    <property type="component" value="Chromosome"/>
</dbReference>
<dbReference type="GO" id="GO:0005886">
    <property type="term" value="C:plasma membrane"/>
    <property type="evidence" value="ECO:0007669"/>
    <property type="project" value="UniProtKB-SubCell"/>
</dbReference>
<dbReference type="GO" id="GO:0005524">
    <property type="term" value="F:ATP binding"/>
    <property type="evidence" value="ECO:0007669"/>
    <property type="project" value="UniProtKB-KW"/>
</dbReference>
<dbReference type="GO" id="GO:0016887">
    <property type="term" value="F:ATP hydrolysis activity"/>
    <property type="evidence" value="ECO:0007669"/>
    <property type="project" value="InterPro"/>
</dbReference>
<dbReference type="GO" id="GO:0015415">
    <property type="term" value="F:ATPase-coupled phosphate ion transmembrane transporter activity"/>
    <property type="evidence" value="ECO:0007669"/>
    <property type="project" value="UniProtKB-EC"/>
</dbReference>
<dbReference type="GO" id="GO:0035435">
    <property type="term" value="P:phosphate ion transmembrane transport"/>
    <property type="evidence" value="ECO:0007669"/>
    <property type="project" value="InterPro"/>
</dbReference>
<dbReference type="CDD" id="cd03260">
    <property type="entry name" value="ABC_PstB_phosphate_transporter"/>
    <property type="match status" value="1"/>
</dbReference>
<dbReference type="FunFam" id="3.40.50.300:FF:000132">
    <property type="entry name" value="Phosphate import ATP-binding protein PstB"/>
    <property type="match status" value="1"/>
</dbReference>
<dbReference type="Gene3D" id="3.40.50.300">
    <property type="entry name" value="P-loop containing nucleotide triphosphate hydrolases"/>
    <property type="match status" value="1"/>
</dbReference>
<dbReference type="InterPro" id="IPR003593">
    <property type="entry name" value="AAA+_ATPase"/>
</dbReference>
<dbReference type="InterPro" id="IPR003439">
    <property type="entry name" value="ABC_transporter-like_ATP-bd"/>
</dbReference>
<dbReference type="InterPro" id="IPR017871">
    <property type="entry name" value="ABC_transporter-like_CS"/>
</dbReference>
<dbReference type="InterPro" id="IPR027417">
    <property type="entry name" value="P-loop_NTPase"/>
</dbReference>
<dbReference type="InterPro" id="IPR005670">
    <property type="entry name" value="PstB-like"/>
</dbReference>
<dbReference type="NCBIfam" id="TIGR00972">
    <property type="entry name" value="3a0107s01c2"/>
    <property type="match status" value="1"/>
</dbReference>
<dbReference type="PANTHER" id="PTHR43423">
    <property type="entry name" value="ABC TRANSPORTER I FAMILY MEMBER 17"/>
    <property type="match status" value="1"/>
</dbReference>
<dbReference type="PANTHER" id="PTHR43423:SF3">
    <property type="entry name" value="PHOSPHATE IMPORT ATP-BINDING PROTEIN PSTB"/>
    <property type="match status" value="1"/>
</dbReference>
<dbReference type="Pfam" id="PF00005">
    <property type="entry name" value="ABC_tran"/>
    <property type="match status" value="1"/>
</dbReference>
<dbReference type="SMART" id="SM00382">
    <property type="entry name" value="AAA"/>
    <property type="match status" value="1"/>
</dbReference>
<dbReference type="SUPFAM" id="SSF52540">
    <property type="entry name" value="P-loop containing nucleoside triphosphate hydrolases"/>
    <property type="match status" value="1"/>
</dbReference>
<dbReference type="PROSITE" id="PS00211">
    <property type="entry name" value="ABC_TRANSPORTER_1"/>
    <property type="match status" value="1"/>
</dbReference>
<dbReference type="PROSITE" id="PS50893">
    <property type="entry name" value="ABC_TRANSPORTER_2"/>
    <property type="match status" value="1"/>
</dbReference>
<dbReference type="PROSITE" id="PS51238">
    <property type="entry name" value="PSTB"/>
    <property type="match status" value="1"/>
</dbReference>
<comment type="function">
    <text evidence="1">Part of the ABC transporter complex PstSACB involved in phosphate import. Responsible for energy coupling to the transport system.</text>
</comment>
<comment type="catalytic activity">
    <reaction evidence="1">
        <text>phosphate(out) + ATP + H2O = ADP + 2 phosphate(in) + H(+)</text>
        <dbReference type="Rhea" id="RHEA:24440"/>
        <dbReference type="ChEBI" id="CHEBI:15377"/>
        <dbReference type="ChEBI" id="CHEBI:15378"/>
        <dbReference type="ChEBI" id="CHEBI:30616"/>
        <dbReference type="ChEBI" id="CHEBI:43474"/>
        <dbReference type="ChEBI" id="CHEBI:456216"/>
        <dbReference type="EC" id="7.3.2.1"/>
    </reaction>
</comment>
<comment type="subunit">
    <text evidence="1">The complex is composed of two ATP-binding proteins (PstB), two transmembrane proteins (PstC and PstA) and a solute-binding protein (PstS).</text>
</comment>
<comment type="subcellular location">
    <subcellularLocation>
        <location evidence="1">Cell inner membrane</location>
        <topology evidence="1">Peripheral membrane protein</topology>
    </subcellularLocation>
</comment>
<comment type="similarity">
    <text evidence="1">Belongs to the ABC transporter superfamily. Phosphate importer (TC 3.A.1.7) family.</text>
</comment>
<accession>Q98FL5</accession>
<reference key="1">
    <citation type="journal article" date="2000" name="DNA Res.">
        <title>Complete genome structure of the nitrogen-fixing symbiotic bacterium Mesorhizobium loti.</title>
        <authorList>
            <person name="Kaneko T."/>
            <person name="Nakamura Y."/>
            <person name="Sato S."/>
            <person name="Asamizu E."/>
            <person name="Kato T."/>
            <person name="Sasamoto S."/>
            <person name="Watanabe A."/>
            <person name="Idesawa K."/>
            <person name="Ishikawa A."/>
            <person name="Kawashima K."/>
            <person name="Kimura T."/>
            <person name="Kishida Y."/>
            <person name="Kiyokawa C."/>
            <person name="Kohara M."/>
            <person name="Matsumoto M."/>
            <person name="Matsuno A."/>
            <person name="Mochizuki Y."/>
            <person name="Nakayama S."/>
            <person name="Nakazaki N."/>
            <person name="Shimpo S."/>
            <person name="Sugimoto M."/>
            <person name="Takeuchi C."/>
            <person name="Yamada M."/>
            <person name="Tabata S."/>
        </authorList>
    </citation>
    <scope>NUCLEOTIDE SEQUENCE [LARGE SCALE GENOMIC DNA]</scope>
    <source>
        <strain>LMG 29417 / CECT 9101 / MAFF 303099</strain>
    </source>
</reference>
<protein>
    <recommendedName>
        <fullName evidence="1">Phosphate import ATP-binding protein PstB</fullName>
        <ecNumber evidence="1">7.3.2.1</ecNumber>
    </recommendedName>
    <alternativeName>
        <fullName evidence="1">ABC phosphate transporter</fullName>
    </alternativeName>
    <alternativeName>
        <fullName evidence="1">Phosphate-transporting ATPase</fullName>
    </alternativeName>
</protein>
<proteinExistence type="inferred from homology"/>